<keyword id="KW-0328">Glycosyltransferase</keyword>
<keyword id="KW-0479">Metal-binding</keyword>
<keyword id="KW-0671">Queuosine biosynthesis</keyword>
<keyword id="KW-0808">Transferase</keyword>
<keyword id="KW-0819">tRNA processing</keyword>
<keyword id="KW-0862">Zinc</keyword>
<proteinExistence type="inferred from homology"/>
<protein>
    <recommendedName>
        <fullName evidence="1">Queuine tRNA-ribosyltransferase</fullName>
        <ecNumber evidence="1">2.4.2.29</ecNumber>
    </recommendedName>
    <alternativeName>
        <fullName evidence="1">Guanine insertion enzyme</fullName>
    </alternativeName>
    <alternativeName>
        <fullName evidence="1">tRNA-guanine transglycosylase</fullName>
    </alternativeName>
</protein>
<reference key="1">
    <citation type="submission" date="2007-03" db="EMBL/GenBank/DDBJ databases">
        <authorList>
            <person name="Heidelberg J."/>
        </authorList>
    </citation>
    <scope>NUCLEOTIDE SEQUENCE [LARGE SCALE GENOMIC DNA]</scope>
    <source>
        <strain>ATCC 39541 / Classical Ogawa 395 / O395</strain>
    </source>
</reference>
<reference key="2">
    <citation type="journal article" date="2008" name="PLoS ONE">
        <title>A recalibrated molecular clock and independent origins for the cholera pandemic clones.</title>
        <authorList>
            <person name="Feng L."/>
            <person name="Reeves P.R."/>
            <person name="Lan R."/>
            <person name="Ren Y."/>
            <person name="Gao C."/>
            <person name="Zhou Z."/>
            <person name="Ren Y."/>
            <person name="Cheng J."/>
            <person name="Wang W."/>
            <person name="Wang J."/>
            <person name="Qian W."/>
            <person name="Li D."/>
            <person name="Wang L."/>
        </authorList>
    </citation>
    <scope>NUCLEOTIDE SEQUENCE [LARGE SCALE GENOMIC DNA]</scope>
    <source>
        <strain>ATCC 39541 / Classical Ogawa 395 / O395</strain>
    </source>
</reference>
<evidence type="ECO:0000255" key="1">
    <source>
        <dbReference type="HAMAP-Rule" id="MF_00168"/>
    </source>
</evidence>
<comment type="function">
    <text evidence="1">Catalyzes the base-exchange of a guanine (G) residue with the queuine precursor 7-aminomethyl-7-deazaguanine (PreQ1) at position 34 (anticodon wobble position) in tRNAs with GU(N) anticodons (tRNA-Asp, -Asn, -His and -Tyr). Catalysis occurs through a double-displacement mechanism. The nucleophile active site attacks the C1' of nucleotide 34 to detach the guanine base from the RNA, forming a covalent enzyme-RNA intermediate. The proton acceptor active site deprotonates the incoming PreQ1, allowing a nucleophilic attack on the C1' of the ribose to form the product. After dissociation, two additional enzymatic reactions on the tRNA convert PreQ1 to queuine (Q), resulting in the hypermodified nucleoside queuosine (7-(((4,5-cis-dihydroxy-2-cyclopenten-1-yl)amino)methyl)-7-deazaguanosine).</text>
</comment>
<comment type="catalytic activity">
    <reaction evidence="1">
        <text>7-aminomethyl-7-carbaguanine + guanosine(34) in tRNA = 7-aminomethyl-7-carbaguanosine(34) in tRNA + guanine</text>
        <dbReference type="Rhea" id="RHEA:24104"/>
        <dbReference type="Rhea" id="RHEA-COMP:10341"/>
        <dbReference type="Rhea" id="RHEA-COMP:10342"/>
        <dbReference type="ChEBI" id="CHEBI:16235"/>
        <dbReference type="ChEBI" id="CHEBI:58703"/>
        <dbReference type="ChEBI" id="CHEBI:74269"/>
        <dbReference type="ChEBI" id="CHEBI:82833"/>
        <dbReference type="EC" id="2.4.2.29"/>
    </reaction>
</comment>
<comment type="cofactor">
    <cofactor evidence="1">
        <name>Zn(2+)</name>
        <dbReference type="ChEBI" id="CHEBI:29105"/>
    </cofactor>
    <text evidence="1">Binds 1 zinc ion per subunit.</text>
</comment>
<comment type="pathway">
    <text evidence="1">tRNA modification; tRNA-queuosine biosynthesis.</text>
</comment>
<comment type="subunit">
    <text evidence="1">Homodimer. Within each dimer, one monomer is responsible for RNA recognition and catalysis, while the other monomer binds to the replacement base PreQ1.</text>
</comment>
<comment type="similarity">
    <text evidence="1">Belongs to the queuine tRNA-ribosyltransferase family.</text>
</comment>
<organism>
    <name type="scientific">Vibrio cholerae serotype O1 (strain ATCC 39541 / Classical Ogawa 395 / O395)</name>
    <dbReference type="NCBI Taxonomy" id="345073"/>
    <lineage>
        <taxon>Bacteria</taxon>
        <taxon>Pseudomonadati</taxon>
        <taxon>Pseudomonadota</taxon>
        <taxon>Gammaproteobacteria</taxon>
        <taxon>Vibrionales</taxon>
        <taxon>Vibrionaceae</taxon>
        <taxon>Vibrio</taxon>
    </lineage>
</organism>
<gene>
    <name evidence="1" type="primary">tgt</name>
    <name type="ordered locus">VC0395_A0270</name>
    <name type="ordered locus">VC395_0758</name>
</gene>
<feature type="chain" id="PRO_1000071576" description="Queuine tRNA-ribosyltransferase">
    <location>
        <begin position="1"/>
        <end position="379"/>
    </location>
</feature>
<feature type="region of interest" description="RNA binding" evidence="1">
    <location>
        <begin position="247"/>
        <end position="253"/>
    </location>
</feature>
<feature type="region of interest" description="RNA binding; important for wobble base 34 recognition" evidence="1">
    <location>
        <begin position="271"/>
        <end position="275"/>
    </location>
</feature>
<feature type="active site" description="Proton acceptor" evidence="1">
    <location>
        <position position="91"/>
    </location>
</feature>
<feature type="active site" description="Nucleophile" evidence="1">
    <location>
        <position position="266"/>
    </location>
</feature>
<feature type="binding site" evidence="1">
    <location>
        <begin position="91"/>
        <end position="95"/>
    </location>
    <ligand>
        <name>substrate</name>
    </ligand>
</feature>
<feature type="binding site" evidence="1">
    <location>
        <position position="145"/>
    </location>
    <ligand>
        <name>substrate</name>
    </ligand>
</feature>
<feature type="binding site" evidence="1">
    <location>
        <position position="189"/>
    </location>
    <ligand>
        <name>substrate</name>
    </ligand>
</feature>
<feature type="binding site" evidence="1">
    <location>
        <position position="216"/>
    </location>
    <ligand>
        <name>substrate</name>
    </ligand>
</feature>
<feature type="binding site" evidence="1">
    <location>
        <position position="304"/>
    </location>
    <ligand>
        <name>Zn(2+)</name>
        <dbReference type="ChEBI" id="CHEBI:29105"/>
    </ligand>
</feature>
<feature type="binding site" evidence="1">
    <location>
        <position position="306"/>
    </location>
    <ligand>
        <name>Zn(2+)</name>
        <dbReference type="ChEBI" id="CHEBI:29105"/>
    </ligand>
</feature>
<feature type="binding site" evidence="1">
    <location>
        <position position="309"/>
    </location>
    <ligand>
        <name>Zn(2+)</name>
        <dbReference type="ChEBI" id="CHEBI:29105"/>
    </ligand>
</feature>
<feature type="binding site" evidence="1">
    <location>
        <position position="335"/>
    </location>
    <ligand>
        <name>Zn(2+)</name>
        <dbReference type="ChEBI" id="CHEBI:29105"/>
    </ligand>
</feature>
<sequence>MKLKFELKKKNGNARRGQLIFERGTVQTPAFMPVGTYGTVKGMTPEEVKETGAQILLGNTFHLWLRPGQEVMKMHGDLHDFMNWQGPILTDSGGFQVFSLGDIRKITEEGVHFRNPVNGDKIFMDAEKSMEIQKDLGSDIVMIFDECTPYPATHDEAKKSMEMSLRWAKRSRDHFDKLENPNNLFGIVQGGVYEDLRDVSVKGLTEIGFDGYAVGGLAVGEPKEDMHRVLEHTCPQLPEDKPRYLMGVGKPEDLVEGVRRGIDMFDCVMPTRNARNGHLFVTGGVIKIRNAAHKTDTTPLDLHCDCYTCKNYSKSYLHHLDRCNEILGARLNTIHNLRYYQRLMESIRKAIDEDRFDQFVAEFYARRNREVPPLQKDKA</sequence>
<name>TGT_VIBC3</name>
<dbReference type="EC" id="2.4.2.29" evidence="1"/>
<dbReference type="EMBL" id="CP000627">
    <property type="protein sequence ID" value="ABQ20548.1"/>
    <property type="molecule type" value="Genomic_DNA"/>
</dbReference>
<dbReference type="EMBL" id="CP001235">
    <property type="protein sequence ID" value="ACP08775.1"/>
    <property type="molecule type" value="Genomic_DNA"/>
</dbReference>
<dbReference type="RefSeq" id="WP_000768199.1">
    <property type="nucleotide sequence ID" value="NZ_JAACZH010000017.1"/>
</dbReference>
<dbReference type="SMR" id="A5F3H2"/>
<dbReference type="KEGG" id="vco:VC0395_A0270"/>
<dbReference type="KEGG" id="vcr:VC395_0758"/>
<dbReference type="PATRIC" id="fig|345073.21.peg.732"/>
<dbReference type="eggNOG" id="COG0343">
    <property type="taxonomic scope" value="Bacteria"/>
</dbReference>
<dbReference type="HOGENOM" id="CLU_022060_0_1_6"/>
<dbReference type="OrthoDB" id="9805417at2"/>
<dbReference type="UniPathway" id="UPA00392"/>
<dbReference type="Proteomes" id="UP000000249">
    <property type="component" value="Chromosome 2"/>
</dbReference>
<dbReference type="GO" id="GO:0005829">
    <property type="term" value="C:cytosol"/>
    <property type="evidence" value="ECO:0007669"/>
    <property type="project" value="TreeGrafter"/>
</dbReference>
<dbReference type="GO" id="GO:0046872">
    <property type="term" value="F:metal ion binding"/>
    <property type="evidence" value="ECO:0007669"/>
    <property type="project" value="UniProtKB-KW"/>
</dbReference>
<dbReference type="GO" id="GO:0008479">
    <property type="term" value="F:tRNA-guanosine(34) queuine transglycosylase activity"/>
    <property type="evidence" value="ECO:0007669"/>
    <property type="project" value="UniProtKB-UniRule"/>
</dbReference>
<dbReference type="GO" id="GO:0008616">
    <property type="term" value="P:queuosine biosynthetic process"/>
    <property type="evidence" value="ECO:0007669"/>
    <property type="project" value="UniProtKB-UniRule"/>
</dbReference>
<dbReference type="GO" id="GO:0002099">
    <property type="term" value="P:tRNA wobble guanine modification"/>
    <property type="evidence" value="ECO:0007669"/>
    <property type="project" value="TreeGrafter"/>
</dbReference>
<dbReference type="GO" id="GO:0101030">
    <property type="term" value="P:tRNA-guanine transglycosylation"/>
    <property type="evidence" value="ECO:0007669"/>
    <property type="project" value="InterPro"/>
</dbReference>
<dbReference type="FunFam" id="3.20.20.105:FF:000001">
    <property type="entry name" value="Queuine tRNA-ribosyltransferase"/>
    <property type="match status" value="1"/>
</dbReference>
<dbReference type="Gene3D" id="3.20.20.105">
    <property type="entry name" value="Queuine tRNA-ribosyltransferase-like"/>
    <property type="match status" value="1"/>
</dbReference>
<dbReference type="HAMAP" id="MF_00168">
    <property type="entry name" value="Q_tRNA_Tgt"/>
    <property type="match status" value="1"/>
</dbReference>
<dbReference type="InterPro" id="IPR050076">
    <property type="entry name" value="ArchSynthase1/Queuine_TRR"/>
</dbReference>
<dbReference type="InterPro" id="IPR004803">
    <property type="entry name" value="TGT"/>
</dbReference>
<dbReference type="InterPro" id="IPR036511">
    <property type="entry name" value="TGT-like_sf"/>
</dbReference>
<dbReference type="InterPro" id="IPR002616">
    <property type="entry name" value="tRNA_ribo_trans-like"/>
</dbReference>
<dbReference type="NCBIfam" id="TIGR00430">
    <property type="entry name" value="Q_tRNA_tgt"/>
    <property type="match status" value="1"/>
</dbReference>
<dbReference type="NCBIfam" id="TIGR00449">
    <property type="entry name" value="tgt_general"/>
    <property type="match status" value="1"/>
</dbReference>
<dbReference type="PANTHER" id="PTHR46499">
    <property type="entry name" value="QUEUINE TRNA-RIBOSYLTRANSFERASE"/>
    <property type="match status" value="1"/>
</dbReference>
<dbReference type="PANTHER" id="PTHR46499:SF1">
    <property type="entry name" value="QUEUINE TRNA-RIBOSYLTRANSFERASE"/>
    <property type="match status" value="1"/>
</dbReference>
<dbReference type="Pfam" id="PF01702">
    <property type="entry name" value="TGT"/>
    <property type="match status" value="1"/>
</dbReference>
<dbReference type="SUPFAM" id="SSF51713">
    <property type="entry name" value="tRNA-guanine transglycosylase"/>
    <property type="match status" value="1"/>
</dbReference>
<accession>A5F3H2</accession>
<accession>C3LY51</accession>